<reference key="1">
    <citation type="journal article" date="2011" name="J. Bacteriol.">
        <title>Genome sequence of the verrucomicrobium Opitutus terrae PB90-1, an abundant inhabitant of rice paddy soil ecosystems.</title>
        <authorList>
            <person name="van Passel M.W."/>
            <person name="Kant R."/>
            <person name="Palva A."/>
            <person name="Copeland A."/>
            <person name="Lucas S."/>
            <person name="Lapidus A."/>
            <person name="Glavina del Rio T."/>
            <person name="Pitluck S."/>
            <person name="Goltsman E."/>
            <person name="Clum A."/>
            <person name="Sun H."/>
            <person name="Schmutz J."/>
            <person name="Larimer F.W."/>
            <person name="Land M.L."/>
            <person name="Hauser L."/>
            <person name="Kyrpides N."/>
            <person name="Mikhailova N."/>
            <person name="Richardson P.P."/>
            <person name="Janssen P.H."/>
            <person name="de Vos W.M."/>
            <person name="Smidt H."/>
        </authorList>
    </citation>
    <scope>NUCLEOTIDE SEQUENCE [LARGE SCALE GENOMIC DNA]</scope>
    <source>
        <strain>DSM 11246 / JCM 15787 / PB90-1</strain>
    </source>
</reference>
<organism>
    <name type="scientific">Opitutus terrae (strain DSM 11246 / JCM 15787 / PB90-1)</name>
    <dbReference type="NCBI Taxonomy" id="452637"/>
    <lineage>
        <taxon>Bacteria</taxon>
        <taxon>Pseudomonadati</taxon>
        <taxon>Verrucomicrobiota</taxon>
        <taxon>Opitutia</taxon>
        <taxon>Opitutales</taxon>
        <taxon>Opitutaceae</taxon>
        <taxon>Opitutus</taxon>
    </lineage>
</organism>
<dbReference type="EC" id="1.6.5.-" evidence="1"/>
<dbReference type="EC" id="1.7.1.17" evidence="1"/>
<dbReference type="EMBL" id="CP001032">
    <property type="protein sequence ID" value="ACB74453.1"/>
    <property type="molecule type" value="Genomic_DNA"/>
</dbReference>
<dbReference type="RefSeq" id="WP_012373991.1">
    <property type="nucleotide sequence ID" value="NC_010571.1"/>
</dbReference>
<dbReference type="SMR" id="B1ZNL9"/>
<dbReference type="STRING" id="452637.Oter_1165"/>
<dbReference type="KEGG" id="ote:Oter_1165"/>
<dbReference type="eggNOG" id="COG1182">
    <property type="taxonomic scope" value="Bacteria"/>
</dbReference>
<dbReference type="HOGENOM" id="CLU_088964_0_0_0"/>
<dbReference type="OrthoDB" id="9787136at2"/>
<dbReference type="Proteomes" id="UP000007013">
    <property type="component" value="Chromosome"/>
</dbReference>
<dbReference type="GO" id="GO:0009055">
    <property type="term" value="F:electron transfer activity"/>
    <property type="evidence" value="ECO:0007669"/>
    <property type="project" value="UniProtKB-UniRule"/>
</dbReference>
<dbReference type="GO" id="GO:0010181">
    <property type="term" value="F:FMN binding"/>
    <property type="evidence" value="ECO:0007669"/>
    <property type="project" value="UniProtKB-UniRule"/>
</dbReference>
<dbReference type="GO" id="GO:0016652">
    <property type="term" value="F:oxidoreductase activity, acting on NAD(P)H as acceptor"/>
    <property type="evidence" value="ECO:0007669"/>
    <property type="project" value="UniProtKB-UniRule"/>
</dbReference>
<dbReference type="GO" id="GO:0016655">
    <property type="term" value="F:oxidoreductase activity, acting on NAD(P)H, quinone or similar compound as acceptor"/>
    <property type="evidence" value="ECO:0007669"/>
    <property type="project" value="InterPro"/>
</dbReference>
<dbReference type="Gene3D" id="3.40.50.360">
    <property type="match status" value="1"/>
</dbReference>
<dbReference type="HAMAP" id="MF_01216">
    <property type="entry name" value="Azoreductase_type1"/>
    <property type="match status" value="1"/>
</dbReference>
<dbReference type="InterPro" id="IPR003680">
    <property type="entry name" value="Flavodoxin_fold"/>
</dbReference>
<dbReference type="InterPro" id="IPR029039">
    <property type="entry name" value="Flavoprotein-like_sf"/>
</dbReference>
<dbReference type="InterPro" id="IPR050104">
    <property type="entry name" value="FMN-dep_NADH:Q_OxRdtase_AzoR1"/>
</dbReference>
<dbReference type="InterPro" id="IPR023048">
    <property type="entry name" value="NADH:quinone_OxRdtase_FMN_depd"/>
</dbReference>
<dbReference type="PANTHER" id="PTHR43741">
    <property type="entry name" value="FMN-DEPENDENT NADH-AZOREDUCTASE 1"/>
    <property type="match status" value="1"/>
</dbReference>
<dbReference type="PANTHER" id="PTHR43741:SF4">
    <property type="entry name" value="FMN-DEPENDENT NADH:QUINONE OXIDOREDUCTASE"/>
    <property type="match status" value="1"/>
</dbReference>
<dbReference type="Pfam" id="PF02525">
    <property type="entry name" value="Flavodoxin_2"/>
    <property type="match status" value="1"/>
</dbReference>
<dbReference type="SUPFAM" id="SSF52218">
    <property type="entry name" value="Flavoproteins"/>
    <property type="match status" value="1"/>
</dbReference>
<feature type="chain" id="PRO_1000138984" description="FMN-dependent NADH:quinone oxidoreductase">
    <location>
        <begin position="1"/>
        <end position="213"/>
    </location>
</feature>
<feature type="binding site" evidence="1">
    <location>
        <position position="10"/>
    </location>
    <ligand>
        <name>FMN</name>
        <dbReference type="ChEBI" id="CHEBI:58210"/>
    </ligand>
</feature>
<name>AZOR_OPITP</name>
<accession>B1ZNL9</accession>
<keyword id="KW-0285">Flavoprotein</keyword>
<keyword id="KW-0288">FMN</keyword>
<keyword id="KW-0520">NAD</keyword>
<keyword id="KW-0560">Oxidoreductase</keyword>
<keyword id="KW-1185">Reference proteome</keyword>
<protein>
    <recommendedName>
        <fullName evidence="1">FMN-dependent NADH:quinone oxidoreductase</fullName>
        <ecNumber evidence="1">1.6.5.-</ecNumber>
    </recommendedName>
    <alternativeName>
        <fullName evidence="1">Azo-dye reductase</fullName>
    </alternativeName>
    <alternativeName>
        <fullName evidence="1">FMN-dependent NADH-azo compound oxidoreductase</fullName>
    </alternativeName>
    <alternativeName>
        <fullName evidence="1">FMN-dependent NADH-azoreductase</fullName>
        <ecNumber evidence="1">1.7.1.17</ecNumber>
    </alternativeName>
</protein>
<evidence type="ECO:0000255" key="1">
    <source>
        <dbReference type="HAMAP-Rule" id="MF_01216"/>
    </source>
</evidence>
<gene>
    <name evidence="1" type="primary">azoR</name>
    <name type="ordered locus">Oter_1165</name>
</gene>
<comment type="function">
    <text evidence="1">Quinone reductase that provides resistance to thiol-specific stress caused by electrophilic quinones.</text>
</comment>
<comment type="function">
    <text evidence="1">Also exhibits azoreductase activity. Catalyzes the reductive cleavage of the azo bond in aromatic azo compounds to the corresponding amines.</text>
</comment>
<comment type="catalytic activity">
    <reaction evidence="1">
        <text>2 a quinone + NADH + H(+) = 2 a 1,4-benzosemiquinone + NAD(+)</text>
        <dbReference type="Rhea" id="RHEA:65952"/>
        <dbReference type="ChEBI" id="CHEBI:15378"/>
        <dbReference type="ChEBI" id="CHEBI:57540"/>
        <dbReference type="ChEBI" id="CHEBI:57945"/>
        <dbReference type="ChEBI" id="CHEBI:132124"/>
        <dbReference type="ChEBI" id="CHEBI:134225"/>
    </reaction>
</comment>
<comment type="catalytic activity">
    <reaction evidence="1">
        <text>N,N-dimethyl-1,4-phenylenediamine + anthranilate + 2 NAD(+) = 2-(4-dimethylaminophenyl)diazenylbenzoate + 2 NADH + 2 H(+)</text>
        <dbReference type="Rhea" id="RHEA:55872"/>
        <dbReference type="ChEBI" id="CHEBI:15378"/>
        <dbReference type="ChEBI" id="CHEBI:15783"/>
        <dbReference type="ChEBI" id="CHEBI:16567"/>
        <dbReference type="ChEBI" id="CHEBI:57540"/>
        <dbReference type="ChEBI" id="CHEBI:57945"/>
        <dbReference type="ChEBI" id="CHEBI:71579"/>
        <dbReference type="EC" id="1.7.1.17"/>
    </reaction>
</comment>
<comment type="cofactor">
    <cofactor evidence="1">
        <name>FMN</name>
        <dbReference type="ChEBI" id="CHEBI:58210"/>
    </cofactor>
    <text evidence="1">Binds 1 FMN per subunit.</text>
</comment>
<comment type="subunit">
    <text evidence="1">Homodimer.</text>
</comment>
<comment type="similarity">
    <text evidence="1">Belongs to the azoreductase type 1 family.</text>
</comment>
<proteinExistence type="inferred from homology"/>
<sequence>MKTLLVLNSSGRVTRSLTRRLTSRFAEAWSAVHHDAVVVQRDLTLNPPPTINEPWIVAAFAAPDTPATVREAVLRASDELLDELTAADAVVIGAPVYNFGLPAQLKAYVDQIVRVGRSFALTGDAAVPYRALLAPKPVVVMTAASDGVMLPGGALAHLNLVEPHLTAALGFIGLTDVRFVRVADSVADQAAHPHSLAAAERAIEMILPRLAAA</sequence>